<keyword id="KW-0094">Blood coagulation</keyword>
<keyword id="KW-1003">Cell membrane</keyword>
<keyword id="KW-1015">Disulfide bond</keyword>
<keyword id="KW-0325">Glycoprotein</keyword>
<keyword id="KW-0356">Hemostasis</keyword>
<keyword id="KW-0378">Hydrolase</keyword>
<keyword id="KW-0472">Membrane</keyword>
<keyword id="KW-0479">Metal-binding</keyword>
<keyword id="KW-1185">Reference proteome</keyword>
<keyword id="KW-0732">Signal</keyword>
<keyword id="KW-0812">Transmembrane</keyword>
<keyword id="KW-1133">Transmembrane helix</keyword>
<keyword id="KW-0862">Zinc</keyword>
<accession>Q6AX80</accession>
<reference key="1">
    <citation type="submission" date="2004-08" db="EMBL/GenBank/DDBJ databases">
        <authorList>
            <consortium name="NIH - Xenopus Gene Collection (XGC) project"/>
        </authorList>
    </citation>
    <scope>NUCLEOTIDE SEQUENCE [LARGE SCALE MRNA]</scope>
    <source>
        <tissue>Kidney</tissue>
    </source>
</reference>
<sequence>MFGRVFIVAVLYCITICKGEDPTNSSTPKLILLSFDGFRADYLTRFPMPNLQEFMKEGVEVEEVKNVFITKTFPNHYSLVTGLYAESHGIVANRMYDADTKQVFHMNDSHSKWWDEATPIWLTNQKQGHRSGCAMWPGSDVSIHNTTPSDFLYYNHTVSFAQRVNHITTWLTRPNDSINFAAIYWEEPDASGHRYGPDDYGNMSGVLKEVDKNVGYLMSELKKANLWDTVNVIITSDHGMAQCSNDRIIKLNDCIGPGNYTLVDDNPVASILPISDTKNVYDLLRNCHPHMKVYMKEEIPDRWHYKHNSRIQPLLLVADEGWMITQNESISMLGDHGYDNDLHSMHPFLAAHGPAFRKSYKMRTINNVDVYPMMCLILGITGQPNNGTLSNTKCLLANQWCIQVSEAIGIVIGAIMVLTTLTCIIIMLKKKMPSARPFSRLQFQDDDDPLIG</sequence>
<proteinExistence type="evidence at transcript level"/>
<protein>
    <recommendedName>
        <fullName>Bis(5'-adenosyl)-triphosphatase enpp4</fullName>
        <ecNumber>3.6.1.29</ecNumber>
    </recommendedName>
    <alternativeName>
        <fullName>AP3A hydrolase</fullName>
        <shortName>AP3Aase</shortName>
    </alternativeName>
    <alternativeName>
        <fullName>Ectonucleotide pyrophosphatase/phosphodiesterase family member 4</fullName>
        <shortName>E-NPP 4</shortName>
        <shortName>NPP-4</shortName>
    </alternativeName>
</protein>
<feature type="signal peptide" evidence="2">
    <location>
        <begin position="1"/>
        <end position="19"/>
    </location>
</feature>
<feature type="chain" id="PRO_0000324799" description="Bis(5'-adenosyl)-triphosphatase enpp4">
    <location>
        <begin position="20"/>
        <end position="452"/>
    </location>
</feature>
<feature type="topological domain" description="Extracellular" evidence="2">
    <location>
        <begin position="20"/>
        <end position="407"/>
    </location>
</feature>
<feature type="transmembrane region" description="Helical" evidence="2">
    <location>
        <begin position="408"/>
        <end position="428"/>
    </location>
</feature>
<feature type="topological domain" description="Cytoplasmic" evidence="2">
    <location>
        <begin position="429"/>
        <end position="452"/>
    </location>
</feature>
<feature type="active site" description="AMP-threonine intermediate" evidence="1">
    <location>
        <position position="72"/>
    </location>
</feature>
<feature type="binding site" evidence="1">
    <location>
        <position position="36"/>
    </location>
    <ligand>
        <name>Zn(2+)</name>
        <dbReference type="ChEBI" id="CHEBI:29105"/>
        <label>1</label>
        <note>catalytic</note>
    </ligand>
</feature>
<feature type="binding site" evidence="1">
    <location>
        <position position="72"/>
    </location>
    <ligand>
        <name>Zn(2+)</name>
        <dbReference type="ChEBI" id="CHEBI:29105"/>
        <label>1</label>
        <note>catalytic</note>
    </ligand>
</feature>
<feature type="binding site" evidence="1">
    <location>
        <position position="93"/>
    </location>
    <ligand>
        <name>substrate</name>
    </ligand>
</feature>
<feature type="binding site" evidence="1">
    <location>
        <position position="154"/>
    </location>
    <ligand>
        <name>substrate</name>
    </ligand>
</feature>
<feature type="binding site" evidence="1">
    <location>
        <position position="189"/>
    </location>
    <ligand>
        <name>substrate</name>
    </ligand>
</feature>
<feature type="binding site" evidence="1">
    <location>
        <position position="189"/>
    </location>
    <ligand>
        <name>Zn(2+)</name>
        <dbReference type="ChEBI" id="CHEBI:29105"/>
        <label>2</label>
        <note>catalytic</note>
    </ligand>
</feature>
<feature type="binding site" evidence="1">
    <location>
        <position position="193"/>
    </location>
    <ligand>
        <name>Zn(2+)</name>
        <dbReference type="ChEBI" id="CHEBI:29105"/>
        <label>2</label>
        <note>catalytic</note>
    </ligand>
</feature>
<feature type="binding site" evidence="1">
    <location>
        <position position="237"/>
    </location>
    <ligand>
        <name>Zn(2+)</name>
        <dbReference type="ChEBI" id="CHEBI:29105"/>
        <label>1</label>
        <note>catalytic</note>
    </ligand>
</feature>
<feature type="binding site" evidence="1">
    <location>
        <position position="238"/>
    </location>
    <ligand>
        <name>Zn(2+)</name>
        <dbReference type="ChEBI" id="CHEBI:29105"/>
        <label>1</label>
        <note>catalytic</note>
    </ligand>
</feature>
<feature type="binding site" evidence="1">
    <location>
        <position position="336"/>
    </location>
    <ligand>
        <name>Zn(2+)</name>
        <dbReference type="ChEBI" id="CHEBI:29105"/>
        <label>2</label>
        <note>catalytic</note>
    </ligand>
</feature>
<feature type="glycosylation site" description="N-linked (GlcNAc...) asparagine" evidence="2">
    <location>
        <position position="24"/>
    </location>
</feature>
<feature type="glycosylation site" description="N-linked (GlcNAc...) asparagine" evidence="2">
    <location>
        <position position="107"/>
    </location>
</feature>
<feature type="glycosylation site" description="N-linked (GlcNAc...) asparagine" evidence="2">
    <location>
        <position position="155"/>
    </location>
</feature>
<feature type="glycosylation site" description="N-linked (GlcNAc...) asparagine" evidence="2">
    <location>
        <position position="175"/>
    </location>
</feature>
<feature type="glycosylation site" description="N-linked (GlcNAc...) asparagine" evidence="2">
    <location>
        <position position="202"/>
    </location>
</feature>
<feature type="glycosylation site" description="N-linked (GlcNAc...) asparagine" evidence="2">
    <location>
        <position position="259"/>
    </location>
</feature>
<feature type="glycosylation site" description="N-linked (GlcNAc...) asparagine" evidence="2">
    <location>
        <position position="327"/>
    </location>
</feature>
<feature type="glycosylation site" description="N-linked (GlcNAc...) asparagine" evidence="2">
    <location>
        <position position="386"/>
    </location>
</feature>
<feature type="disulfide bond" evidence="1">
    <location>
        <begin position="254"/>
        <end position="287"/>
    </location>
</feature>
<feature type="disulfide bond" evidence="1">
    <location>
        <begin position="394"/>
        <end position="401"/>
    </location>
</feature>
<name>ENPP4_XENLA</name>
<organism>
    <name type="scientific">Xenopus laevis</name>
    <name type="common">African clawed frog</name>
    <dbReference type="NCBI Taxonomy" id="8355"/>
    <lineage>
        <taxon>Eukaryota</taxon>
        <taxon>Metazoa</taxon>
        <taxon>Chordata</taxon>
        <taxon>Craniata</taxon>
        <taxon>Vertebrata</taxon>
        <taxon>Euteleostomi</taxon>
        <taxon>Amphibia</taxon>
        <taxon>Batrachia</taxon>
        <taxon>Anura</taxon>
        <taxon>Pipoidea</taxon>
        <taxon>Pipidae</taxon>
        <taxon>Xenopodinae</taxon>
        <taxon>Xenopus</taxon>
        <taxon>Xenopus</taxon>
    </lineage>
</organism>
<dbReference type="EC" id="3.6.1.29"/>
<dbReference type="EMBL" id="BC079717">
    <property type="protein sequence ID" value="AAH79717.1"/>
    <property type="molecule type" value="mRNA"/>
</dbReference>
<dbReference type="RefSeq" id="NP_001087397.1">
    <property type="nucleotide sequence ID" value="NM_001093928.1"/>
</dbReference>
<dbReference type="SMR" id="Q6AX80"/>
<dbReference type="GlyCosmos" id="Q6AX80">
    <property type="glycosylation" value="8 sites, No reported glycans"/>
</dbReference>
<dbReference type="GeneID" id="447221"/>
<dbReference type="KEGG" id="xla:447221"/>
<dbReference type="AGR" id="Xenbase:XB-GENE-1013030"/>
<dbReference type="CTD" id="447221"/>
<dbReference type="Xenbase" id="XB-GENE-1013030">
    <property type="gene designation" value="enpp4.L"/>
</dbReference>
<dbReference type="OrthoDB" id="415411at2759"/>
<dbReference type="Proteomes" id="UP000186698">
    <property type="component" value="Chromosome 5L"/>
</dbReference>
<dbReference type="Bgee" id="447221">
    <property type="expression patterns" value="Expressed in intestine and 19 other cell types or tissues"/>
</dbReference>
<dbReference type="GO" id="GO:0005886">
    <property type="term" value="C:plasma membrane"/>
    <property type="evidence" value="ECO:0007669"/>
    <property type="project" value="UniProtKB-SubCell"/>
</dbReference>
<dbReference type="GO" id="GO:0047710">
    <property type="term" value="F:bis(5'-adenosyl)-triphosphatase activity"/>
    <property type="evidence" value="ECO:0007669"/>
    <property type="project" value="UniProtKB-EC"/>
</dbReference>
<dbReference type="GO" id="GO:0046872">
    <property type="term" value="F:metal ion binding"/>
    <property type="evidence" value="ECO:0007669"/>
    <property type="project" value="UniProtKB-KW"/>
</dbReference>
<dbReference type="GO" id="GO:0007596">
    <property type="term" value="P:blood coagulation"/>
    <property type="evidence" value="ECO:0007669"/>
    <property type="project" value="UniProtKB-KW"/>
</dbReference>
<dbReference type="CDD" id="cd16018">
    <property type="entry name" value="Enpp"/>
    <property type="match status" value="1"/>
</dbReference>
<dbReference type="FunFam" id="3.30.1360.180:FF:000004">
    <property type="entry name" value="Ectonucleotide pyrophosphatase/phosphodiesterase family member 4"/>
    <property type="match status" value="1"/>
</dbReference>
<dbReference type="Gene3D" id="3.30.1360.180">
    <property type="match status" value="1"/>
</dbReference>
<dbReference type="Gene3D" id="3.40.720.10">
    <property type="entry name" value="Alkaline Phosphatase, subunit A"/>
    <property type="match status" value="1"/>
</dbReference>
<dbReference type="InterPro" id="IPR017850">
    <property type="entry name" value="Alkaline_phosphatase_core_sf"/>
</dbReference>
<dbReference type="InterPro" id="IPR002591">
    <property type="entry name" value="Phosphodiest/P_Trfase"/>
</dbReference>
<dbReference type="PANTHER" id="PTHR10151:SF79">
    <property type="entry name" value="BIS(5'-ADENOSYL)-TRIPHOSPHATASE ENPP4"/>
    <property type="match status" value="1"/>
</dbReference>
<dbReference type="PANTHER" id="PTHR10151">
    <property type="entry name" value="ECTONUCLEOTIDE PYROPHOSPHATASE/PHOSPHODIESTERASE"/>
    <property type="match status" value="1"/>
</dbReference>
<dbReference type="Pfam" id="PF01663">
    <property type="entry name" value="Phosphodiest"/>
    <property type="match status" value="1"/>
</dbReference>
<dbReference type="SUPFAM" id="SSF53649">
    <property type="entry name" value="Alkaline phosphatase-like"/>
    <property type="match status" value="1"/>
</dbReference>
<evidence type="ECO:0000250" key="1"/>
<evidence type="ECO:0000255" key="2"/>
<evidence type="ECO:0000305" key="3"/>
<gene>
    <name type="primary">enpp4</name>
</gene>
<comment type="function">
    <text evidence="1">Hydrolyzes extracellular Ap3A into AMP and ADP, and Ap4A into AMP and ATP. Ap3A and Ap4A are diadenosine polyphosphates thought to induce proliferation of vascular smooth muscle cells. Acts as a procoagulant, mediating platelet aggregation at the site of nascent thrombus via release of ADP from Ap3A and activation of ADP receptors (By similarity).</text>
</comment>
<comment type="catalytic activity">
    <reaction>
        <text>P(1),P(3)-bis(5'-adenosyl) triphosphate + H2O = AMP + ADP + 2 H(+)</text>
        <dbReference type="Rhea" id="RHEA:13893"/>
        <dbReference type="ChEBI" id="CHEBI:15377"/>
        <dbReference type="ChEBI" id="CHEBI:15378"/>
        <dbReference type="ChEBI" id="CHEBI:58529"/>
        <dbReference type="ChEBI" id="CHEBI:456215"/>
        <dbReference type="ChEBI" id="CHEBI:456216"/>
        <dbReference type="EC" id="3.6.1.29"/>
    </reaction>
</comment>
<comment type="cofactor">
    <cofactor evidence="1">
        <name>Zn(2+)</name>
        <dbReference type="ChEBI" id="CHEBI:29105"/>
    </cofactor>
    <text evidence="1">Binds 2 Zn(2+) ions per subunit.</text>
</comment>
<comment type="subcellular location">
    <subcellularLocation>
        <location evidence="1">Cell membrane</location>
        <topology>Single-pass type I membrane protein</topology>
    </subcellularLocation>
</comment>
<comment type="similarity">
    <text evidence="3">Belongs to the nucleotide pyrophosphatase/phosphodiesterase family.</text>
</comment>